<protein>
    <recommendedName>
        <fullName evidence="1">Probable dual-specificity RNA methyltransferase RlmN</fullName>
        <ecNumber evidence="1">2.1.1.192</ecNumber>
    </recommendedName>
    <alternativeName>
        <fullName evidence="1">23S rRNA (adenine(2503)-C(2))-methyltransferase</fullName>
    </alternativeName>
    <alternativeName>
        <fullName evidence="1">23S rRNA m2A2503 methyltransferase</fullName>
    </alternativeName>
    <alternativeName>
        <fullName evidence="1">Ribosomal RNA large subunit methyltransferase N</fullName>
    </alternativeName>
    <alternativeName>
        <fullName evidence="1">tRNA (adenine(37)-C(2))-methyltransferase</fullName>
    </alternativeName>
    <alternativeName>
        <fullName evidence="1">tRNA m2A37 methyltransferase</fullName>
    </alternativeName>
</protein>
<evidence type="ECO:0000255" key="1">
    <source>
        <dbReference type="HAMAP-Rule" id="MF_01849"/>
    </source>
</evidence>
<evidence type="ECO:0000255" key="2">
    <source>
        <dbReference type="PROSITE-ProRule" id="PRU01266"/>
    </source>
</evidence>
<sequence>METTVRKQKKNLETKKPSIYSLQLHEMQDWLKEQGEPKFRAGQIFDWLYKKRVKNYEDMSNLSKGLREKLSNSFDITTLNTLVKQTSSDGTIKFLFQLYDGYSIETVLMRHEYGNSICVTTQVGCRIGCTFCASTLGGLKRNLEAGEIVAQVVEVQRALDESEERVSSLVVMGIGEPFDNYDNLMGFLRIINHEKGLHIGARHMTVSTSGIIPKIYKFAEEDLQINFAISLHAPNSELRSKLMPINRAYKLPDLMEAIKYYVNRTGRRITFEYGLFGGENDQVEHAEELAALLKGVKCHVNLIPVNYVPERDYVRTPREQIFLFEKTLKDRGVNVTIRREQGHDIDAACGQLRAKERKEETR</sequence>
<gene>
    <name evidence="1" type="primary">rlmN</name>
    <name type="ordered locus">BA_4002</name>
    <name type="ordered locus">GBAA_4002</name>
    <name type="ordered locus">BAS3715</name>
</gene>
<name>RLMN_BACAN</name>
<organism>
    <name type="scientific">Bacillus anthracis</name>
    <dbReference type="NCBI Taxonomy" id="1392"/>
    <lineage>
        <taxon>Bacteria</taxon>
        <taxon>Bacillati</taxon>
        <taxon>Bacillota</taxon>
        <taxon>Bacilli</taxon>
        <taxon>Bacillales</taxon>
        <taxon>Bacillaceae</taxon>
        <taxon>Bacillus</taxon>
        <taxon>Bacillus cereus group</taxon>
    </lineage>
</organism>
<feature type="chain" id="PRO_0000350027" description="Probable dual-specificity RNA methyltransferase RlmN">
    <location>
        <begin position="1"/>
        <end position="362"/>
    </location>
</feature>
<feature type="domain" description="Radical SAM core" evidence="2">
    <location>
        <begin position="111"/>
        <end position="344"/>
    </location>
</feature>
<feature type="active site" description="Proton acceptor" evidence="1">
    <location>
        <position position="105"/>
    </location>
</feature>
<feature type="active site" description="S-methylcysteine intermediate" evidence="1">
    <location>
        <position position="349"/>
    </location>
</feature>
<feature type="binding site" evidence="1">
    <location>
        <position position="125"/>
    </location>
    <ligand>
        <name>[4Fe-4S] cluster</name>
        <dbReference type="ChEBI" id="CHEBI:49883"/>
        <note>4Fe-4S-S-AdoMet</note>
    </ligand>
</feature>
<feature type="binding site" evidence="1">
    <location>
        <position position="129"/>
    </location>
    <ligand>
        <name>[4Fe-4S] cluster</name>
        <dbReference type="ChEBI" id="CHEBI:49883"/>
        <note>4Fe-4S-S-AdoMet</note>
    </ligand>
</feature>
<feature type="binding site" evidence="1">
    <location>
        <position position="132"/>
    </location>
    <ligand>
        <name>[4Fe-4S] cluster</name>
        <dbReference type="ChEBI" id="CHEBI:49883"/>
        <note>4Fe-4S-S-AdoMet</note>
    </ligand>
</feature>
<feature type="binding site" evidence="1">
    <location>
        <begin position="175"/>
        <end position="176"/>
    </location>
    <ligand>
        <name>S-adenosyl-L-methionine</name>
        <dbReference type="ChEBI" id="CHEBI:59789"/>
    </ligand>
</feature>
<feature type="binding site" evidence="1">
    <location>
        <position position="207"/>
    </location>
    <ligand>
        <name>S-adenosyl-L-methionine</name>
        <dbReference type="ChEBI" id="CHEBI:59789"/>
    </ligand>
</feature>
<feature type="binding site" evidence="1">
    <location>
        <begin position="230"/>
        <end position="232"/>
    </location>
    <ligand>
        <name>S-adenosyl-L-methionine</name>
        <dbReference type="ChEBI" id="CHEBI:59789"/>
    </ligand>
</feature>
<feature type="binding site" evidence="1">
    <location>
        <position position="306"/>
    </location>
    <ligand>
        <name>S-adenosyl-L-methionine</name>
        <dbReference type="ChEBI" id="CHEBI:59789"/>
    </ligand>
</feature>
<feature type="disulfide bond" description="(transient)" evidence="1">
    <location>
        <begin position="118"/>
        <end position="349"/>
    </location>
</feature>
<reference key="1">
    <citation type="journal article" date="2003" name="Nature">
        <title>The genome sequence of Bacillus anthracis Ames and comparison to closely related bacteria.</title>
        <authorList>
            <person name="Read T.D."/>
            <person name="Peterson S.N."/>
            <person name="Tourasse N.J."/>
            <person name="Baillie L.W."/>
            <person name="Paulsen I.T."/>
            <person name="Nelson K.E."/>
            <person name="Tettelin H."/>
            <person name="Fouts D.E."/>
            <person name="Eisen J.A."/>
            <person name="Gill S.R."/>
            <person name="Holtzapple E.K."/>
            <person name="Okstad O.A."/>
            <person name="Helgason E."/>
            <person name="Rilstone J."/>
            <person name="Wu M."/>
            <person name="Kolonay J.F."/>
            <person name="Beanan M.J."/>
            <person name="Dodson R.J."/>
            <person name="Brinkac L.M."/>
            <person name="Gwinn M.L."/>
            <person name="DeBoy R.T."/>
            <person name="Madpu R."/>
            <person name="Daugherty S.C."/>
            <person name="Durkin A.S."/>
            <person name="Haft D.H."/>
            <person name="Nelson W.C."/>
            <person name="Peterson J.D."/>
            <person name="Pop M."/>
            <person name="Khouri H.M."/>
            <person name="Radune D."/>
            <person name="Benton J.L."/>
            <person name="Mahamoud Y."/>
            <person name="Jiang L."/>
            <person name="Hance I.R."/>
            <person name="Weidman J.F."/>
            <person name="Berry K.J."/>
            <person name="Plaut R.D."/>
            <person name="Wolf A.M."/>
            <person name="Watkins K.L."/>
            <person name="Nierman W.C."/>
            <person name="Hazen A."/>
            <person name="Cline R.T."/>
            <person name="Redmond C."/>
            <person name="Thwaite J.E."/>
            <person name="White O."/>
            <person name="Salzberg S.L."/>
            <person name="Thomason B."/>
            <person name="Friedlander A.M."/>
            <person name="Koehler T.M."/>
            <person name="Hanna P.C."/>
            <person name="Kolstoe A.-B."/>
            <person name="Fraser C.M."/>
        </authorList>
    </citation>
    <scope>NUCLEOTIDE SEQUENCE [LARGE SCALE GENOMIC DNA]</scope>
    <source>
        <strain>Ames / isolate Porton</strain>
    </source>
</reference>
<reference key="2">
    <citation type="submission" date="2004-01" db="EMBL/GenBank/DDBJ databases">
        <title>Complete genome sequence of Bacillus anthracis Sterne.</title>
        <authorList>
            <person name="Brettin T.S."/>
            <person name="Bruce D."/>
            <person name="Challacombe J.F."/>
            <person name="Gilna P."/>
            <person name="Han C."/>
            <person name="Hill K."/>
            <person name="Hitchcock P."/>
            <person name="Jackson P."/>
            <person name="Keim P."/>
            <person name="Longmire J."/>
            <person name="Lucas S."/>
            <person name="Okinaka R."/>
            <person name="Richardson P."/>
            <person name="Rubin E."/>
            <person name="Tice H."/>
        </authorList>
    </citation>
    <scope>NUCLEOTIDE SEQUENCE [LARGE SCALE GENOMIC DNA]</scope>
    <source>
        <strain>Sterne</strain>
    </source>
</reference>
<reference key="3">
    <citation type="journal article" date="2009" name="J. Bacteriol.">
        <title>The complete genome sequence of Bacillus anthracis Ames 'Ancestor'.</title>
        <authorList>
            <person name="Ravel J."/>
            <person name="Jiang L."/>
            <person name="Stanley S.T."/>
            <person name="Wilson M.R."/>
            <person name="Decker R.S."/>
            <person name="Read T.D."/>
            <person name="Worsham P."/>
            <person name="Keim P.S."/>
            <person name="Salzberg S.L."/>
            <person name="Fraser-Liggett C.M."/>
            <person name="Rasko D.A."/>
        </authorList>
    </citation>
    <scope>NUCLEOTIDE SEQUENCE [LARGE SCALE GENOMIC DNA]</scope>
    <source>
        <strain>Ames ancestor</strain>
    </source>
</reference>
<accession>Q81WH4</accession>
<accession>Q6HUM2</accession>
<accession>Q6KNV6</accession>
<dbReference type="EC" id="2.1.1.192" evidence="1"/>
<dbReference type="EMBL" id="AE016879">
    <property type="protein sequence ID" value="AAP27730.1"/>
    <property type="molecule type" value="Genomic_DNA"/>
</dbReference>
<dbReference type="EMBL" id="AE017334">
    <property type="protein sequence ID" value="AAT33117.1"/>
    <property type="molecule type" value="Genomic_DNA"/>
</dbReference>
<dbReference type="EMBL" id="AE017225">
    <property type="protein sequence ID" value="AAT56017.1"/>
    <property type="molecule type" value="Genomic_DNA"/>
</dbReference>
<dbReference type="RefSeq" id="NP_846244.1">
    <property type="nucleotide sequence ID" value="NC_003997.3"/>
</dbReference>
<dbReference type="RefSeq" id="WP_000450543.1">
    <property type="nucleotide sequence ID" value="NZ_WXXJ01000026.1"/>
</dbReference>
<dbReference type="RefSeq" id="YP_029966.1">
    <property type="nucleotide sequence ID" value="NC_005945.1"/>
</dbReference>
<dbReference type="SMR" id="Q81WH4"/>
<dbReference type="STRING" id="261594.GBAA_4002"/>
<dbReference type="DNASU" id="1086738"/>
<dbReference type="GeneID" id="75087000"/>
<dbReference type="KEGG" id="ban:BA_4002"/>
<dbReference type="KEGG" id="bar:GBAA_4002"/>
<dbReference type="KEGG" id="bat:BAS3715"/>
<dbReference type="PATRIC" id="fig|198094.11.peg.3972"/>
<dbReference type="eggNOG" id="COG0820">
    <property type="taxonomic scope" value="Bacteria"/>
</dbReference>
<dbReference type="HOGENOM" id="CLU_029101_0_1_9"/>
<dbReference type="OMA" id="TMKFLFE"/>
<dbReference type="OrthoDB" id="9793973at2"/>
<dbReference type="Proteomes" id="UP000000427">
    <property type="component" value="Chromosome"/>
</dbReference>
<dbReference type="Proteomes" id="UP000000594">
    <property type="component" value="Chromosome"/>
</dbReference>
<dbReference type="GO" id="GO:0005737">
    <property type="term" value="C:cytoplasm"/>
    <property type="evidence" value="ECO:0007669"/>
    <property type="project" value="UniProtKB-SubCell"/>
</dbReference>
<dbReference type="GO" id="GO:0051539">
    <property type="term" value="F:4 iron, 4 sulfur cluster binding"/>
    <property type="evidence" value="ECO:0007669"/>
    <property type="project" value="UniProtKB-UniRule"/>
</dbReference>
<dbReference type="GO" id="GO:0046872">
    <property type="term" value="F:metal ion binding"/>
    <property type="evidence" value="ECO:0007669"/>
    <property type="project" value="UniProtKB-KW"/>
</dbReference>
<dbReference type="GO" id="GO:0070040">
    <property type="term" value="F:rRNA (adenine(2503)-C2-)-methyltransferase activity"/>
    <property type="evidence" value="ECO:0007669"/>
    <property type="project" value="UniProtKB-UniRule"/>
</dbReference>
<dbReference type="GO" id="GO:0019843">
    <property type="term" value="F:rRNA binding"/>
    <property type="evidence" value="ECO:0007669"/>
    <property type="project" value="UniProtKB-UniRule"/>
</dbReference>
<dbReference type="GO" id="GO:0002935">
    <property type="term" value="F:tRNA (adenine(37)-C2)-methyltransferase activity"/>
    <property type="evidence" value="ECO:0007669"/>
    <property type="project" value="UniProtKB-UniRule"/>
</dbReference>
<dbReference type="GO" id="GO:0000049">
    <property type="term" value="F:tRNA binding"/>
    <property type="evidence" value="ECO:0007669"/>
    <property type="project" value="UniProtKB-UniRule"/>
</dbReference>
<dbReference type="GO" id="GO:0070475">
    <property type="term" value="P:rRNA base methylation"/>
    <property type="evidence" value="ECO:0007669"/>
    <property type="project" value="UniProtKB-UniRule"/>
</dbReference>
<dbReference type="GO" id="GO:0030488">
    <property type="term" value="P:tRNA methylation"/>
    <property type="evidence" value="ECO:0007669"/>
    <property type="project" value="UniProtKB-UniRule"/>
</dbReference>
<dbReference type="CDD" id="cd01335">
    <property type="entry name" value="Radical_SAM"/>
    <property type="match status" value="1"/>
</dbReference>
<dbReference type="FunFam" id="1.10.150.530:FF:000002">
    <property type="entry name" value="Probable dual-specificity RNA methyltransferase RlmN"/>
    <property type="match status" value="1"/>
</dbReference>
<dbReference type="FunFam" id="3.20.20.70:FF:000014">
    <property type="entry name" value="Probable dual-specificity RNA methyltransferase RlmN"/>
    <property type="match status" value="1"/>
</dbReference>
<dbReference type="Gene3D" id="1.10.150.530">
    <property type="match status" value="1"/>
</dbReference>
<dbReference type="Gene3D" id="3.20.20.70">
    <property type="entry name" value="Aldolase class I"/>
    <property type="match status" value="1"/>
</dbReference>
<dbReference type="HAMAP" id="MF_01849">
    <property type="entry name" value="RNA_methyltr_RlmN"/>
    <property type="match status" value="1"/>
</dbReference>
<dbReference type="InterPro" id="IPR013785">
    <property type="entry name" value="Aldolase_TIM"/>
</dbReference>
<dbReference type="InterPro" id="IPR040072">
    <property type="entry name" value="Methyltransferase_A"/>
</dbReference>
<dbReference type="InterPro" id="IPR048641">
    <property type="entry name" value="RlmN_N"/>
</dbReference>
<dbReference type="InterPro" id="IPR027492">
    <property type="entry name" value="RNA_MTrfase_RlmN"/>
</dbReference>
<dbReference type="InterPro" id="IPR004383">
    <property type="entry name" value="rRNA_lsu_MTrfase_RlmN/Cfr"/>
</dbReference>
<dbReference type="InterPro" id="IPR007197">
    <property type="entry name" value="rSAM"/>
</dbReference>
<dbReference type="NCBIfam" id="TIGR00048">
    <property type="entry name" value="rRNA_mod_RlmN"/>
    <property type="match status" value="1"/>
</dbReference>
<dbReference type="PANTHER" id="PTHR30544">
    <property type="entry name" value="23S RRNA METHYLTRANSFERASE"/>
    <property type="match status" value="1"/>
</dbReference>
<dbReference type="PANTHER" id="PTHR30544:SF5">
    <property type="entry name" value="RADICAL SAM CORE DOMAIN-CONTAINING PROTEIN"/>
    <property type="match status" value="1"/>
</dbReference>
<dbReference type="Pfam" id="PF04055">
    <property type="entry name" value="Radical_SAM"/>
    <property type="match status" value="1"/>
</dbReference>
<dbReference type="Pfam" id="PF21016">
    <property type="entry name" value="RlmN_N"/>
    <property type="match status" value="1"/>
</dbReference>
<dbReference type="PIRSF" id="PIRSF006004">
    <property type="entry name" value="CHP00048"/>
    <property type="match status" value="1"/>
</dbReference>
<dbReference type="SFLD" id="SFLDF00275">
    <property type="entry name" value="adenosine_C2_methyltransferase"/>
    <property type="match status" value="1"/>
</dbReference>
<dbReference type="SFLD" id="SFLDS00029">
    <property type="entry name" value="Radical_SAM"/>
    <property type="match status" value="1"/>
</dbReference>
<dbReference type="SUPFAM" id="SSF102114">
    <property type="entry name" value="Radical SAM enzymes"/>
    <property type="match status" value="1"/>
</dbReference>
<dbReference type="PROSITE" id="PS51918">
    <property type="entry name" value="RADICAL_SAM"/>
    <property type="match status" value="1"/>
</dbReference>
<proteinExistence type="inferred from homology"/>
<keyword id="KW-0004">4Fe-4S</keyword>
<keyword id="KW-0963">Cytoplasm</keyword>
<keyword id="KW-1015">Disulfide bond</keyword>
<keyword id="KW-0408">Iron</keyword>
<keyword id="KW-0411">Iron-sulfur</keyword>
<keyword id="KW-0479">Metal-binding</keyword>
<keyword id="KW-0489">Methyltransferase</keyword>
<keyword id="KW-1185">Reference proteome</keyword>
<keyword id="KW-0698">rRNA processing</keyword>
<keyword id="KW-0949">S-adenosyl-L-methionine</keyword>
<keyword id="KW-0808">Transferase</keyword>
<keyword id="KW-0819">tRNA processing</keyword>
<comment type="function">
    <text evidence="1">Specifically methylates position 2 of adenine 2503 in 23S rRNA and position 2 of adenine 37 in tRNAs.</text>
</comment>
<comment type="catalytic activity">
    <reaction evidence="1">
        <text>adenosine(2503) in 23S rRNA + 2 reduced [2Fe-2S]-[ferredoxin] + 2 S-adenosyl-L-methionine = 2-methyladenosine(2503) in 23S rRNA + 5'-deoxyadenosine + L-methionine + 2 oxidized [2Fe-2S]-[ferredoxin] + S-adenosyl-L-homocysteine</text>
        <dbReference type="Rhea" id="RHEA:42916"/>
        <dbReference type="Rhea" id="RHEA-COMP:10000"/>
        <dbReference type="Rhea" id="RHEA-COMP:10001"/>
        <dbReference type="Rhea" id="RHEA-COMP:10152"/>
        <dbReference type="Rhea" id="RHEA-COMP:10282"/>
        <dbReference type="ChEBI" id="CHEBI:17319"/>
        <dbReference type="ChEBI" id="CHEBI:33737"/>
        <dbReference type="ChEBI" id="CHEBI:33738"/>
        <dbReference type="ChEBI" id="CHEBI:57844"/>
        <dbReference type="ChEBI" id="CHEBI:57856"/>
        <dbReference type="ChEBI" id="CHEBI:59789"/>
        <dbReference type="ChEBI" id="CHEBI:74411"/>
        <dbReference type="ChEBI" id="CHEBI:74497"/>
        <dbReference type="EC" id="2.1.1.192"/>
    </reaction>
</comment>
<comment type="catalytic activity">
    <reaction evidence="1">
        <text>adenosine(37) in tRNA + 2 reduced [2Fe-2S]-[ferredoxin] + 2 S-adenosyl-L-methionine = 2-methyladenosine(37) in tRNA + 5'-deoxyadenosine + L-methionine + 2 oxidized [2Fe-2S]-[ferredoxin] + S-adenosyl-L-homocysteine</text>
        <dbReference type="Rhea" id="RHEA:43332"/>
        <dbReference type="Rhea" id="RHEA-COMP:10000"/>
        <dbReference type="Rhea" id="RHEA-COMP:10001"/>
        <dbReference type="Rhea" id="RHEA-COMP:10162"/>
        <dbReference type="Rhea" id="RHEA-COMP:10485"/>
        <dbReference type="ChEBI" id="CHEBI:17319"/>
        <dbReference type="ChEBI" id="CHEBI:33737"/>
        <dbReference type="ChEBI" id="CHEBI:33738"/>
        <dbReference type="ChEBI" id="CHEBI:57844"/>
        <dbReference type="ChEBI" id="CHEBI:57856"/>
        <dbReference type="ChEBI" id="CHEBI:59789"/>
        <dbReference type="ChEBI" id="CHEBI:74411"/>
        <dbReference type="ChEBI" id="CHEBI:74497"/>
        <dbReference type="EC" id="2.1.1.192"/>
    </reaction>
</comment>
<comment type="cofactor">
    <cofactor evidence="1">
        <name>[4Fe-4S] cluster</name>
        <dbReference type="ChEBI" id="CHEBI:49883"/>
    </cofactor>
    <text evidence="1">Binds 1 [4Fe-4S] cluster. The cluster is coordinated with 3 cysteines and an exchangeable S-adenosyl-L-methionine.</text>
</comment>
<comment type="subcellular location">
    <subcellularLocation>
        <location evidence="1">Cytoplasm</location>
    </subcellularLocation>
</comment>
<comment type="miscellaneous">
    <text evidence="1">Reaction proceeds by a ping-pong mechanism involving intermediate methylation of a conserved cysteine residue.</text>
</comment>
<comment type="similarity">
    <text evidence="1">Belongs to the radical SAM superfamily. RlmN family.</text>
</comment>